<sequence length="176" mass="19621">MNKRDELIGLCIDFLAKVKDKTANANIERWLNENYGPDSETYQKISTLVIDGVAEGWAANDEISGPHYRRSRLCEPCAETFYFSITAVYMDSKGHELDNQQRTFRGDYHSHPYGELNMVIPLDEGAVLAGPLGWQGAGWTAPAPGSQHYPEVKNGALIAFFFLPAGRISYDFQAQG</sequence>
<keyword id="KW-0456">Lyase</keyword>
<proteinExistence type="evidence at protein level"/>
<reference key="1">
    <citation type="journal article" date="2001" name="J. Bacteriol.">
        <title>Cloning and characterisation of the pnb genes, encoding enzymes for 4-nitrobenzoate catabolism in Pseudomonas putida TW3.</title>
        <authorList>
            <person name="Hughes M.A."/>
            <person name="Williams P.A."/>
        </authorList>
    </citation>
    <scope>NUCLEOTIDE SEQUENCE [GENOMIC DNA]</scope>
    <scope>FUNCTION</scope>
    <scope>CATALYTIC ACTIVITY</scope>
    <source>
        <strain>TW3</strain>
    </source>
</reference>
<feature type="chain" id="PRO_0000461681" description="4-hydroxylaminobenzoate lyase">
    <location>
        <begin position="1"/>
        <end position="176"/>
    </location>
</feature>
<evidence type="ECO:0000269" key="1">
    <source>
    </source>
</evidence>
<evidence type="ECO:0000303" key="2">
    <source>
    </source>
</evidence>
<evidence type="ECO:0000305" key="3"/>
<organism>
    <name type="scientific">Pseudomonas putida</name>
    <name type="common">Arthrobacter siderocapsulatus</name>
    <dbReference type="NCBI Taxonomy" id="303"/>
    <lineage>
        <taxon>Bacteria</taxon>
        <taxon>Pseudomonadati</taxon>
        <taxon>Pseudomonadota</taxon>
        <taxon>Gammaproteobacteria</taxon>
        <taxon>Pseudomonadales</taxon>
        <taxon>Pseudomonadaceae</taxon>
        <taxon>Pseudomonas</taxon>
    </lineage>
</organism>
<name>PNBB_PSEPU</name>
<gene>
    <name evidence="2" type="primary">pnbB</name>
</gene>
<protein>
    <recommendedName>
        <fullName evidence="2">4-hydroxylaminobenzoate lyase</fullName>
        <ecNumber evidence="1">4.3.3.-</ecNumber>
    </recommendedName>
</protein>
<accession>Q9FD33</accession>
<comment type="function">
    <text evidence="1">Lyase involved in the degradation of nitroaromatic compounds (PubMed:11157934). Catalyzes the conversion of 4-hydroxylaminobenzoate to 3,4-dihydroxybenzoate (protocatechuate) (PubMed:11157934). Required for the catabolism of 4-nitrotoluene (PubMed:11157934).</text>
</comment>
<comment type="catalytic activity">
    <reaction evidence="1">
        <text>4-hydroxylaminobenzoate + H2O + H(+) = 3,4-dihydroxybenzoate + NH4(+)</text>
        <dbReference type="Rhea" id="RHEA:80203"/>
        <dbReference type="ChEBI" id="CHEBI:15377"/>
        <dbReference type="ChEBI" id="CHEBI:15378"/>
        <dbReference type="ChEBI" id="CHEBI:28938"/>
        <dbReference type="ChEBI" id="CHEBI:36241"/>
        <dbReference type="ChEBI" id="CHEBI:231457"/>
    </reaction>
    <physiologicalReaction direction="left-to-right" evidence="1">
        <dbReference type="Rhea" id="RHEA:80204"/>
    </physiologicalReaction>
</comment>
<comment type="similarity">
    <text evidence="3">Belongs to the PnbB family.</text>
</comment>
<dbReference type="EC" id="4.3.3.-" evidence="1"/>
<dbReference type="EMBL" id="AF292094">
    <property type="protein sequence ID" value="AAG01543.1"/>
    <property type="molecule type" value="Genomic_DNA"/>
</dbReference>
<dbReference type="BioCyc" id="MetaCyc:MONOMER-2124"/>
<dbReference type="GO" id="GO:0016841">
    <property type="term" value="F:ammonia-lyase activity"/>
    <property type="evidence" value="ECO:0000314"/>
    <property type="project" value="CACAO"/>
</dbReference>
<dbReference type="InterPro" id="IPR032345">
    <property type="entry name" value="PnbB"/>
</dbReference>
<dbReference type="Pfam" id="PF16155">
    <property type="entry name" value="PnbB"/>
    <property type="match status" value="1"/>
</dbReference>